<proteinExistence type="inferred from homology"/>
<sequence length="110" mass="12585">MRQVTIPLIQSKSMFCVIYRSSKRDQTYLYVEKKDDFSRVPEALMKGFGQPQLAMMLPLDGRKKLVNAELEKVKQALSEQGYYLQLPPPPEDLLKQHLSSVGQNTSPADR</sequence>
<dbReference type="EMBL" id="CP001144">
    <property type="protein sequence ID" value="ACH74145.1"/>
    <property type="status" value="ALT_INIT"/>
    <property type="molecule type" value="Genomic_DNA"/>
</dbReference>
<dbReference type="SMR" id="B5FTM0"/>
<dbReference type="KEGG" id="sed:SeD_A1504"/>
<dbReference type="HOGENOM" id="CLU_1873951_0_0_6"/>
<dbReference type="Proteomes" id="UP000008322">
    <property type="component" value="Chromosome"/>
</dbReference>
<dbReference type="Gene3D" id="3.10.510.20">
    <property type="entry name" value="YcgL domain"/>
    <property type="match status" value="1"/>
</dbReference>
<dbReference type="HAMAP" id="MF_01866">
    <property type="entry name" value="UPF0745"/>
    <property type="match status" value="1"/>
</dbReference>
<dbReference type="InterPro" id="IPR038068">
    <property type="entry name" value="YcgL-like_sf"/>
</dbReference>
<dbReference type="InterPro" id="IPR027354">
    <property type="entry name" value="YcgL_dom"/>
</dbReference>
<dbReference type="PANTHER" id="PTHR38109">
    <property type="entry name" value="PROTEIN YCGL"/>
    <property type="match status" value="1"/>
</dbReference>
<dbReference type="PANTHER" id="PTHR38109:SF1">
    <property type="entry name" value="PROTEIN YCGL"/>
    <property type="match status" value="1"/>
</dbReference>
<dbReference type="Pfam" id="PF05166">
    <property type="entry name" value="YcgL"/>
    <property type="match status" value="1"/>
</dbReference>
<dbReference type="SUPFAM" id="SSF160191">
    <property type="entry name" value="YcgL-like"/>
    <property type="match status" value="1"/>
</dbReference>
<dbReference type="PROSITE" id="PS51648">
    <property type="entry name" value="YCGL"/>
    <property type="match status" value="1"/>
</dbReference>
<accession>B5FTM0</accession>
<gene>
    <name evidence="1" type="primary">ycgL</name>
    <name type="ordered locus">SeD_A1504</name>
</gene>
<protein>
    <recommendedName>
        <fullName evidence="1">Protein YcgL</fullName>
    </recommendedName>
</protein>
<comment type="sequence caution" evidence="3">
    <conflict type="erroneous initiation">
        <sequence resource="EMBL-CDS" id="ACH74145"/>
    </conflict>
</comment>
<evidence type="ECO:0000255" key="1">
    <source>
        <dbReference type="HAMAP-Rule" id="MF_01866"/>
    </source>
</evidence>
<evidence type="ECO:0000256" key="2">
    <source>
        <dbReference type="SAM" id="MobiDB-lite"/>
    </source>
</evidence>
<evidence type="ECO:0000305" key="3"/>
<organism>
    <name type="scientific">Salmonella dublin (strain CT_02021853)</name>
    <dbReference type="NCBI Taxonomy" id="439851"/>
    <lineage>
        <taxon>Bacteria</taxon>
        <taxon>Pseudomonadati</taxon>
        <taxon>Pseudomonadota</taxon>
        <taxon>Gammaproteobacteria</taxon>
        <taxon>Enterobacterales</taxon>
        <taxon>Enterobacteriaceae</taxon>
        <taxon>Salmonella</taxon>
    </lineage>
</organism>
<feature type="chain" id="PRO_0000375351" description="Protein YcgL">
    <location>
        <begin position="1"/>
        <end position="110"/>
    </location>
</feature>
<feature type="domain" description="YcgL" evidence="1">
    <location>
        <begin position="14"/>
        <end position="98"/>
    </location>
</feature>
<feature type="region of interest" description="Disordered" evidence="2">
    <location>
        <begin position="87"/>
        <end position="110"/>
    </location>
</feature>
<feature type="compositionally biased region" description="Polar residues" evidence="2">
    <location>
        <begin position="97"/>
        <end position="110"/>
    </location>
</feature>
<reference key="1">
    <citation type="journal article" date="2011" name="J. Bacteriol.">
        <title>Comparative genomics of 28 Salmonella enterica isolates: evidence for CRISPR-mediated adaptive sublineage evolution.</title>
        <authorList>
            <person name="Fricke W.F."/>
            <person name="Mammel M.K."/>
            <person name="McDermott P.F."/>
            <person name="Tartera C."/>
            <person name="White D.G."/>
            <person name="Leclerc J.E."/>
            <person name="Ravel J."/>
            <person name="Cebula T.A."/>
        </authorList>
    </citation>
    <scope>NUCLEOTIDE SEQUENCE [LARGE SCALE GENOMIC DNA]</scope>
    <source>
        <strain>CT_02021853</strain>
    </source>
</reference>
<name>YCGL_SALDC</name>